<reference key="1">
    <citation type="journal article" date="1994" name="Gene">
        <title>The Bacillus subtilis pnbA gene encoding p-nitrobenzyl esterase: cloning, sequence and high-level expression in Escherichia coli.</title>
        <authorList>
            <person name="Zock J."/>
            <person name="Cantwell C."/>
            <person name="Swartling J."/>
            <person name="Hodges R."/>
            <person name="Pohl T."/>
            <person name="Sutton K."/>
            <person name="Rosteck P. Jr."/>
            <person name="McGilvray D."/>
            <person name="Queener S."/>
        </authorList>
    </citation>
    <scope>NUCLEOTIDE SEQUENCE [GENOMIC DNA]</scope>
    <scope>PROTEIN SEQUENCE OF 1-22 AND 211-223</scope>
    <source>
        <strain>NRRL B8079</strain>
    </source>
</reference>
<reference key="2">
    <citation type="submission" date="1996-01" db="EMBL/GenBank/DDBJ databases">
        <title>Identification of a SinR-homolog involved in initiation of competence development and sporulation in Bacillus subtilis.</title>
        <authorList>
            <person name="Dartois V.A."/>
            <person name="Ferrari E."/>
            <person name="Hoch J.A."/>
        </authorList>
    </citation>
    <scope>NUCLEOTIDE SEQUENCE [GENOMIC DNA]</scope>
    <source>
        <strain>168</strain>
    </source>
</reference>
<reference key="3">
    <citation type="journal article" date="1996" name="Microbiology">
        <title>Integrated mapping and sequencing of a 115 kb DNA fragment from Bacillus subtilis: sequence analysis of a 21 kb segment containing the sigL locus.</title>
        <authorList>
            <person name="Fabret C."/>
            <person name="Quentin Y."/>
            <person name="Chapal N."/>
            <person name="Guiseppi A."/>
            <person name="Haiech J."/>
            <person name="Denizot F."/>
        </authorList>
    </citation>
    <scope>NUCLEOTIDE SEQUENCE [GENOMIC DNA]</scope>
    <source>
        <strain>168</strain>
    </source>
</reference>
<reference key="4">
    <citation type="submission" date="1997-04" db="EMBL/GenBank/DDBJ databases">
        <authorList>
            <person name="Denizot F."/>
        </authorList>
    </citation>
    <scope>NUCLEOTIDE SEQUENCE [GENOMIC DNA]</scope>
    <source>
        <strain>168</strain>
    </source>
</reference>
<reference key="5">
    <citation type="journal article" date="1997" name="Nature">
        <title>The complete genome sequence of the Gram-positive bacterium Bacillus subtilis.</title>
        <authorList>
            <person name="Kunst F."/>
            <person name="Ogasawara N."/>
            <person name="Moszer I."/>
            <person name="Albertini A.M."/>
            <person name="Alloni G."/>
            <person name="Azevedo V."/>
            <person name="Bertero M.G."/>
            <person name="Bessieres P."/>
            <person name="Bolotin A."/>
            <person name="Borchert S."/>
            <person name="Borriss R."/>
            <person name="Boursier L."/>
            <person name="Brans A."/>
            <person name="Braun M."/>
            <person name="Brignell S.C."/>
            <person name="Bron S."/>
            <person name="Brouillet S."/>
            <person name="Bruschi C.V."/>
            <person name="Caldwell B."/>
            <person name="Capuano V."/>
            <person name="Carter N.M."/>
            <person name="Choi S.-K."/>
            <person name="Codani J.-J."/>
            <person name="Connerton I.F."/>
            <person name="Cummings N.J."/>
            <person name="Daniel R.A."/>
            <person name="Denizot F."/>
            <person name="Devine K.M."/>
            <person name="Duesterhoeft A."/>
            <person name="Ehrlich S.D."/>
            <person name="Emmerson P.T."/>
            <person name="Entian K.-D."/>
            <person name="Errington J."/>
            <person name="Fabret C."/>
            <person name="Ferrari E."/>
            <person name="Foulger D."/>
            <person name="Fritz C."/>
            <person name="Fujita M."/>
            <person name="Fujita Y."/>
            <person name="Fuma S."/>
            <person name="Galizzi A."/>
            <person name="Galleron N."/>
            <person name="Ghim S.-Y."/>
            <person name="Glaser P."/>
            <person name="Goffeau A."/>
            <person name="Golightly E.J."/>
            <person name="Grandi G."/>
            <person name="Guiseppi G."/>
            <person name="Guy B.J."/>
            <person name="Haga K."/>
            <person name="Haiech J."/>
            <person name="Harwood C.R."/>
            <person name="Henaut A."/>
            <person name="Hilbert H."/>
            <person name="Holsappel S."/>
            <person name="Hosono S."/>
            <person name="Hullo M.-F."/>
            <person name="Itaya M."/>
            <person name="Jones L.-M."/>
            <person name="Joris B."/>
            <person name="Karamata D."/>
            <person name="Kasahara Y."/>
            <person name="Klaerr-Blanchard M."/>
            <person name="Klein C."/>
            <person name="Kobayashi Y."/>
            <person name="Koetter P."/>
            <person name="Koningstein G."/>
            <person name="Krogh S."/>
            <person name="Kumano M."/>
            <person name="Kurita K."/>
            <person name="Lapidus A."/>
            <person name="Lardinois S."/>
            <person name="Lauber J."/>
            <person name="Lazarevic V."/>
            <person name="Lee S.-M."/>
            <person name="Levine A."/>
            <person name="Liu H."/>
            <person name="Masuda S."/>
            <person name="Mauel C."/>
            <person name="Medigue C."/>
            <person name="Medina N."/>
            <person name="Mellado R.P."/>
            <person name="Mizuno M."/>
            <person name="Moestl D."/>
            <person name="Nakai S."/>
            <person name="Noback M."/>
            <person name="Noone D."/>
            <person name="O'Reilly M."/>
            <person name="Ogawa K."/>
            <person name="Ogiwara A."/>
            <person name="Oudega B."/>
            <person name="Park S.-H."/>
            <person name="Parro V."/>
            <person name="Pohl T.M."/>
            <person name="Portetelle D."/>
            <person name="Porwollik S."/>
            <person name="Prescott A.M."/>
            <person name="Presecan E."/>
            <person name="Pujic P."/>
            <person name="Purnelle B."/>
            <person name="Rapoport G."/>
            <person name="Rey M."/>
            <person name="Reynolds S."/>
            <person name="Rieger M."/>
            <person name="Rivolta C."/>
            <person name="Rocha E."/>
            <person name="Roche B."/>
            <person name="Rose M."/>
            <person name="Sadaie Y."/>
            <person name="Sato T."/>
            <person name="Scanlan E."/>
            <person name="Schleich S."/>
            <person name="Schroeter R."/>
            <person name="Scoffone F."/>
            <person name="Sekiguchi J."/>
            <person name="Sekowska A."/>
            <person name="Seror S.J."/>
            <person name="Serror P."/>
            <person name="Shin B.-S."/>
            <person name="Soldo B."/>
            <person name="Sorokin A."/>
            <person name="Tacconi E."/>
            <person name="Takagi T."/>
            <person name="Takahashi H."/>
            <person name="Takemaru K."/>
            <person name="Takeuchi M."/>
            <person name="Tamakoshi A."/>
            <person name="Tanaka T."/>
            <person name="Terpstra P."/>
            <person name="Tognoni A."/>
            <person name="Tosato V."/>
            <person name="Uchiyama S."/>
            <person name="Vandenbol M."/>
            <person name="Vannier F."/>
            <person name="Vassarotti A."/>
            <person name="Viari A."/>
            <person name="Wambutt R."/>
            <person name="Wedler E."/>
            <person name="Wedler H."/>
            <person name="Weitzenegger T."/>
            <person name="Winters P."/>
            <person name="Wipat A."/>
            <person name="Yamamoto H."/>
            <person name="Yamane K."/>
            <person name="Yasumoto K."/>
            <person name="Yata K."/>
            <person name="Yoshida K."/>
            <person name="Yoshikawa H.-F."/>
            <person name="Zumstein E."/>
            <person name="Yoshikawa H."/>
            <person name="Danchin A."/>
        </authorList>
    </citation>
    <scope>NUCLEOTIDE SEQUENCE [LARGE SCALE GENOMIC DNA]</scope>
    <source>
        <strain>168</strain>
    </source>
</reference>
<reference key="6">
    <citation type="journal article" date="1991" name="FASEB J.">
        <title>Purification and properties of p-nitrobenzyl esterase from Bacillus subtilis.</title>
        <authorList>
            <person name="Chen Y.-R."/>
            <person name="Usui S."/>
            <person name="Yu C.-A."/>
        </authorList>
    </citation>
    <scope>PROTEIN SEQUENCE OF 1-22 AND 211-223</scope>
    <scope>CHARACTERIZATION</scope>
</reference>
<reference key="7">
    <citation type="journal article" date="2007" name="Mol. Cell. Proteomics">
        <title>The serine/threonine/tyrosine phosphoproteome of the model bacterium Bacillus subtilis.</title>
        <authorList>
            <person name="Macek B."/>
            <person name="Mijakovic I."/>
            <person name="Olsen J.V."/>
            <person name="Gnad F."/>
            <person name="Kumar C."/>
            <person name="Jensen P.R."/>
            <person name="Mann M."/>
        </authorList>
    </citation>
    <scope>PHOSPHORYLATION [LARGE SCALE ANALYSIS] AT SER-189</scope>
    <scope>IDENTIFICATION BY MASS SPECTROMETRY</scope>
    <source>
        <strain>168</strain>
    </source>
</reference>
<reference key="8">
    <citation type="journal article" date="1999" name="Proc. Natl. Acad. Sci. U.S.A.">
        <title>A structural view of evolutionary divergence.</title>
        <authorList>
            <person name="Spiller B."/>
            <person name="Gershenson A."/>
            <person name="Arnold F.H."/>
            <person name="Stevens R.C."/>
        </authorList>
    </citation>
    <scope>X-RAY CRYSTALLOGRAPHY (1.5 ANGSTROMS)</scope>
</reference>
<proteinExistence type="evidence at protein level"/>
<organism>
    <name type="scientific">Bacillus subtilis (strain 168)</name>
    <dbReference type="NCBI Taxonomy" id="224308"/>
    <lineage>
        <taxon>Bacteria</taxon>
        <taxon>Bacillati</taxon>
        <taxon>Bacillota</taxon>
        <taxon>Bacilli</taxon>
        <taxon>Bacillales</taxon>
        <taxon>Bacillaceae</taxon>
        <taxon>Bacillus</taxon>
    </lineage>
</organism>
<feature type="chain" id="PRO_0000070296" description="Para-nitrobenzyl esterase">
    <location>
        <begin position="1"/>
        <end position="489"/>
    </location>
</feature>
<feature type="active site" description="Acyl-ester intermediate" evidence="2">
    <location>
        <position position="189"/>
    </location>
</feature>
<feature type="active site" description="Charge relay system" evidence="1">
    <location>
        <position position="310"/>
    </location>
</feature>
<feature type="active site" description="Charge relay system" evidence="1">
    <location>
        <position position="399"/>
    </location>
</feature>
<feature type="modified residue" description="Phosphoserine" evidence="3">
    <location>
        <position position="189"/>
    </location>
</feature>
<feature type="sequence variant" description="In strain: NRRL B8079.">
    <original>S</original>
    <variation>P</variation>
    <location>
        <position position="59"/>
    </location>
</feature>
<feature type="sequence variant" description="In strain: NRRL B8079.">
    <original>K</original>
    <variation>Q</variation>
    <location>
        <position position="95"/>
    </location>
</feature>
<feature type="sequence variant" description="In strain: NRRL B8079.">
    <original>N</original>
    <variation>D</variation>
    <location>
        <position position="150"/>
    </location>
</feature>
<feature type="sequence variant" description="In strain: NRRL B8079.">
    <original>S</original>
    <variation>A</variation>
    <location>
        <position position="230"/>
    </location>
</feature>
<feature type="sequence variant" description="In strain: NRRL B8079.">
    <original>G</original>
    <variation>S</variation>
    <location>
        <position position="242"/>
    </location>
</feature>
<feature type="sequence variant" description="In strain: NRRL B8079.">
    <original>K</original>
    <variation>R</variation>
    <location>
        <position position="246"/>
    </location>
</feature>
<feature type="sequence variant" description="In strain: NRRL B8079.">
    <original>S</original>
    <variation>A</variation>
    <location>
        <position position="251"/>
    </location>
</feature>
<feature type="sequence variant" description="In strain: NRRL B8079.">
    <original>A</original>
    <variation>S</variation>
    <location>
        <position position="291"/>
    </location>
</feature>
<feature type="sequence variant" description="In strain: NRRL B8079.">
    <original>V</original>
    <variation>A</variation>
    <location>
        <position position="343"/>
    </location>
</feature>
<feature type="sequence variant" description="In strain: NRRL B8079.">
    <original>K</original>
    <variation>E</variation>
    <location>
        <position position="390"/>
    </location>
</feature>
<feature type="sequence variant" description="In strain: NRRL B8079.">
    <original>L</original>
    <variation>V</variation>
    <location>
        <position position="463"/>
    </location>
</feature>
<feature type="sequence conflict" description="In Ref. 1; AA sequence." evidence="4" ref="1">
    <original>T</original>
    <variation>Q</variation>
    <location>
        <position position="17"/>
    </location>
</feature>
<feature type="strand" evidence="7">
    <location>
        <begin position="5"/>
        <end position="8"/>
    </location>
</feature>
<feature type="strand" evidence="7">
    <location>
        <begin position="11"/>
        <end position="14"/>
    </location>
</feature>
<feature type="strand" evidence="7">
    <location>
        <begin position="16"/>
        <end position="18"/>
    </location>
</feature>
<feature type="strand" evidence="7">
    <location>
        <begin position="21"/>
        <end position="28"/>
    </location>
</feature>
<feature type="helix" evidence="7">
    <location>
        <begin position="35"/>
        <end position="37"/>
    </location>
</feature>
<feature type="strand" evidence="7">
    <location>
        <begin position="49"/>
        <end position="53"/>
    </location>
</feature>
<feature type="turn" evidence="5">
    <location>
        <begin position="65"/>
        <end position="67"/>
    </location>
</feature>
<feature type="helix" evidence="6">
    <location>
        <begin position="68"/>
        <end position="71"/>
    </location>
</feature>
<feature type="strand" evidence="7">
    <location>
        <begin position="84"/>
        <end position="90"/>
    </location>
</feature>
<feature type="strand" evidence="7">
    <location>
        <begin position="96"/>
        <end position="103"/>
    </location>
</feature>
<feature type="turn" evidence="7">
    <location>
        <begin position="107"/>
        <end position="109"/>
    </location>
</feature>
<feature type="helix" evidence="7">
    <location>
        <begin position="116"/>
        <end position="118"/>
    </location>
</feature>
<feature type="helix" evidence="7">
    <location>
        <begin position="121"/>
        <end position="127"/>
    </location>
</feature>
<feature type="strand" evidence="7">
    <location>
        <begin position="130"/>
        <end position="134"/>
    </location>
</feature>
<feature type="helix" evidence="7">
    <location>
        <begin position="139"/>
        <end position="142"/>
    </location>
</feature>
<feature type="turn" evidence="7">
    <location>
        <begin position="147"/>
        <end position="149"/>
    </location>
</feature>
<feature type="helix" evidence="7">
    <location>
        <begin position="157"/>
        <end position="172"/>
    </location>
</feature>
<feature type="helix" evidence="7">
    <location>
        <begin position="173"/>
        <end position="176"/>
    </location>
</feature>
<feature type="strand" evidence="7">
    <location>
        <begin position="178"/>
        <end position="188"/>
    </location>
</feature>
<feature type="helix" evidence="7">
    <location>
        <begin position="190"/>
        <end position="198"/>
    </location>
</feature>
<feature type="helix" evidence="7">
    <location>
        <begin position="202"/>
        <end position="204"/>
    </location>
</feature>
<feature type="strand" evidence="7">
    <location>
        <begin position="209"/>
        <end position="215"/>
    </location>
</feature>
<feature type="helix" evidence="7">
    <location>
        <begin position="223"/>
        <end position="237"/>
    </location>
</feature>
<feature type="helix" evidence="7">
    <location>
        <begin position="244"/>
        <end position="248"/>
    </location>
</feature>
<feature type="helix" evidence="7">
    <location>
        <begin position="252"/>
        <end position="263"/>
    </location>
</feature>
<feature type="strand" evidence="5">
    <location>
        <begin position="274"/>
        <end position="276"/>
    </location>
</feature>
<feature type="turn" evidence="7">
    <location>
        <begin position="281"/>
        <end position="283"/>
    </location>
</feature>
<feature type="helix" evidence="7">
    <location>
        <begin position="288"/>
        <end position="293"/>
    </location>
</feature>
<feature type="turn" evidence="7">
    <location>
        <begin position="294"/>
        <end position="299"/>
    </location>
</feature>
<feature type="strand" evidence="7">
    <location>
        <begin position="302"/>
        <end position="307"/>
    </location>
</feature>
<feature type="helix" evidence="7">
    <location>
        <begin position="310"/>
        <end position="313"/>
    </location>
</feature>
<feature type="helix" evidence="7">
    <location>
        <begin position="324"/>
        <end position="335"/>
    </location>
</feature>
<feature type="helix" evidence="7">
    <location>
        <begin position="337"/>
        <end position="343"/>
    </location>
</feature>
<feature type="helix" evidence="7">
    <location>
        <begin position="344"/>
        <end position="346"/>
    </location>
</feature>
<feature type="helix" evidence="7">
    <location>
        <begin position="351"/>
        <end position="362"/>
    </location>
</feature>
<feature type="helix" evidence="7">
    <location>
        <begin position="364"/>
        <end position="374"/>
    </location>
</feature>
<feature type="turn" evidence="7">
    <location>
        <begin position="375"/>
        <end position="377"/>
    </location>
</feature>
<feature type="strand" evidence="7">
    <location>
        <begin position="380"/>
        <end position="385"/>
    </location>
</feature>
<feature type="turn" evidence="7">
    <location>
        <begin position="399"/>
        <end position="402"/>
    </location>
</feature>
<feature type="helix" evidence="7">
    <location>
        <begin position="403"/>
        <end position="407"/>
    </location>
</feature>
<feature type="helix" evidence="6">
    <location>
        <begin position="412"/>
        <end position="417"/>
    </location>
</feature>
<feature type="helix" evidence="7">
    <location>
        <begin position="423"/>
        <end position="442"/>
    </location>
</feature>
<feature type="turn" evidence="7">
    <location>
        <begin position="457"/>
        <end position="459"/>
    </location>
</feature>
<feature type="strand" evidence="7">
    <location>
        <begin position="461"/>
        <end position="468"/>
    </location>
</feature>
<feature type="strand" evidence="7">
    <location>
        <begin position="470"/>
        <end position="474"/>
    </location>
</feature>
<feature type="helix" evidence="7">
    <location>
        <begin position="477"/>
        <end position="483"/>
    </location>
</feature>
<comment type="function">
    <text>Catalyzes hydrolysis of several beta-lactam antibiotic PNB esters to the corresponding free acid and PNB alcohol.</text>
</comment>
<comment type="subunit">
    <text>Monomer.</text>
</comment>
<comment type="similarity">
    <text evidence="4">Belongs to the type-B carboxylesterase/lipase family.</text>
</comment>
<sequence>MTHQIVTTQYGKVKGTTENGVHKWKGIPYAKPPVGQWRFKAPEPPEVWEDVLDATAYGSICPQPSDLLSLSYTELPRQSEDCLYVNVFAPDTPSKNLPVMVWIHGGAFYLGAGSEPLYDGSKLAAQGEVIVVTLNYRLGPFGFLHLSSFNEAYSDNLGLLDQAAALKWVRENISAFGGDPDNVTVFGESAGGMSIAALLAMPAAKGLFQKAIMESGASRTMTKEQAASTSAAFLQVLGINEGQLDKLHTVSAEDLLKAADQLRIAEKENIFQLFFQPALDPKTLPEEPEKAIAEGAASGIPLLIGTTRDEGYLFFTPDSDVHSQETLDAALEYLLGKPLAEKVADLYPRSLESQIHMMTDLLFWRPAVAYASAQSHYAPVWMYRFDWHPKKPPYNKAFHALELPFVFGNLDGLERMAKAEITDEVKQLSHTIQSAWITFAKTGNPSTEAVNWPAYHEETRETLILDSEITIENDPESEKRQKLFPSKGE</sequence>
<name>PNBA_BACSU</name>
<keyword id="KW-0002">3D-structure</keyword>
<keyword id="KW-0903">Direct protein sequencing</keyword>
<keyword id="KW-0378">Hydrolase</keyword>
<keyword id="KW-0597">Phosphoprotein</keyword>
<keyword id="KW-1185">Reference proteome</keyword>
<keyword id="KW-0719">Serine esterase</keyword>
<accession>P37967</accession>
<accession>O08167</accession>
<accession>O08472</accession>
<accession>P71048</accession>
<accession>Q795H9</accession>
<dbReference type="EC" id="3.1.1.-"/>
<dbReference type="EMBL" id="U06089">
    <property type="protein sequence ID" value="AAA81915.1"/>
    <property type="molecule type" value="Genomic_DNA"/>
</dbReference>
<dbReference type="EMBL" id="U46134">
    <property type="protein sequence ID" value="AAB39889.1"/>
    <property type="molecule type" value="Genomic_DNA"/>
</dbReference>
<dbReference type="EMBL" id="Z71928">
    <property type="protein sequence ID" value="CAA96487.1"/>
    <property type="molecule type" value="Genomic_DNA"/>
</dbReference>
<dbReference type="EMBL" id="Z94043">
    <property type="protein sequence ID" value="CAB08021.1"/>
    <property type="molecule type" value="Genomic_DNA"/>
</dbReference>
<dbReference type="EMBL" id="AL009126">
    <property type="protein sequence ID" value="CAB15444.1"/>
    <property type="molecule type" value="Genomic_DNA"/>
</dbReference>
<dbReference type="PIR" id="B69680">
    <property type="entry name" value="B69680"/>
</dbReference>
<dbReference type="RefSeq" id="NP_391319.1">
    <property type="nucleotide sequence ID" value="NC_000964.3"/>
</dbReference>
<dbReference type="RefSeq" id="WP_003243926.1">
    <property type="nucleotide sequence ID" value="NZ_OZ025638.1"/>
</dbReference>
<dbReference type="PDB" id="1C7I">
    <property type="method" value="X-ray"/>
    <property type="resolution" value="2.00 A"/>
    <property type="chains" value="A=1-489"/>
</dbReference>
<dbReference type="PDB" id="1C7J">
    <property type="method" value="X-ray"/>
    <property type="resolution" value="1.60 A"/>
    <property type="chains" value="A=1-489"/>
</dbReference>
<dbReference type="PDB" id="1QE3">
    <property type="method" value="X-ray"/>
    <property type="resolution" value="1.50 A"/>
    <property type="chains" value="A=1-489"/>
</dbReference>
<dbReference type="PDBsum" id="1C7I"/>
<dbReference type="PDBsum" id="1C7J"/>
<dbReference type="PDBsum" id="1QE3"/>
<dbReference type="SMR" id="P37967"/>
<dbReference type="FunCoup" id="P37967">
    <property type="interactions" value="128"/>
</dbReference>
<dbReference type="STRING" id="224308.BSU34390"/>
<dbReference type="ESTHER" id="bacsu-pnbae">
    <property type="family name" value="Carb_B_Bacteria"/>
</dbReference>
<dbReference type="MEROPS" id="S09.948"/>
<dbReference type="iPTMnet" id="P37967"/>
<dbReference type="jPOST" id="P37967"/>
<dbReference type="PaxDb" id="224308-BSU34390"/>
<dbReference type="EnsemblBacteria" id="CAB15444">
    <property type="protein sequence ID" value="CAB15444"/>
    <property type="gene ID" value="BSU_34390"/>
</dbReference>
<dbReference type="GeneID" id="938580"/>
<dbReference type="KEGG" id="bsu:BSU34390"/>
<dbReference type="PATRIC" id="fig|224308.179.peg.3725"/>
<dbReference type="eggNOG" id="COG2272">
    <property type="taxonomic scope" value="Bacteria"/>
</dbReference>
<dbReference type="InParanoid" id="P37967"/>
<dbReference type="OrthoDB" id="9775851at2"/>
<dbReference type="PhylomeDB" id="P37967"/>
<dbReference type="BioCyc" id="BSUB:BSU34390-MONOMER"/>
<dbReference type="BRENDA" id="3.1.1.1">
    <property type="organism ID" value="658"/>
</dbReference>
<dbReference type="EvolutionaryTrace" id="P37967"/>
<dbReference type="Proteomes" id="UP000001570">
    <property type="component" value="Chromosome"/>
</dbReference>
<dbReference type="GO" id="GO:0004104">
    <property type="term" value="F:cholinesterase activity"/>
    <property type="evidence" value="ECO:0007669"/>
    <property type="project" value="InterPro"/>
</dbReference>
<dbReference type="CDD" id="cd00312">
    <property type="entry name" value="Esterase_lipase"/>
    <property type="match status" value="1"/>
</dbReference>
<dbReference type="Gene3D" id="3.40.50.1820">
    <property type="entry name" value="alpha/beta hydrolase"/>
    <property type="match status" value="1"/>
</dbReference>
<dbReference type="InterPro" id="IPR029058">
    <property type="entry name" value="AB_hydrolase_fold"/>
</dbReference>
<dbReference type="InterPro" id="IPR002018">
    <property type="entry name" value="CarbesteraseB"/>
</dbReference>
<dbReference type="InterPro" id="IPR019826">
    <property type="entry name" value="Carboxylesterase_B_AS"/>
</dbReference>
<dbReference type="InterPro" id="IPR019819">
    <property type="entry name" value="Carboxylesterase_B_CS"/>
</dbReference>
<dbReference type="InterPro" id="IPR000997">
    <property type="entry name" value="Cholinesterase"/>
</dbReference>
<dbReference type="InterPro" id="IPR050309">
    <property type="entry name" value="Type-B_Carboxylest/Lipase"/>
</dbReference>
<dbReference type="PANTHER" id="PTHR11559">
    <property type="entry name" value="CARBOXYLESTERASE"/>
    <property type="match status" value="1"/>
</dbReference>
<dbReference type="Pfam" id="PF00135">
    <property type="entry name" value="COesterase"/>
    <property type="match status" value="1"/>
</dbReference>
<dbReference type="PRINTS" id="PR00878">
    <property type="entry name" value="CHOLNESTRASE"/>
</dbReference>
<dbReference type="SUPFAM" id="SSF53474">
    <property type="entry name" value="alpha/beta-Hydrolases"/>
    <property type="match status" value="1"/>
</dbReference>
<dbReference type="PROSITE" id="PS00122">
    <property type="entry name" value="CARBOXYLESTERASE_B_1"/>
    <property type="match status" value="1"/>
</dbReference>
<dbReference type="PROSITE" id="PS00941">
    <property type="entry name" value="CARBOXYLESTERASE_B_2"/>
    <property type="match status" value="1"/>
</dbReference>
<protein>
    <recommendedName>
        <fullName>Para-nitrobenzyl esterase</fullName>
        <ecNumber>3.1.1.-</ecNumber>
    </recommendedName>
    <alternativeName>
        <fullName>Intracellular esterase B</fullName>
    </alternativeName>
    <alternativeName>
        <fullName>PNB carboxy-esterase</fullName>
        <shortName>PNBCE</shortName>
    </alternativeName>
</protein>
<gene>
    <name type="primary">pnbA</name>
    <name type="synonym">estB</name>
    <name type="ordered locus">BSU34390</name>
</gene>
<evidence type="ECO:0000250" key="1"/>
<evidence type="ECO:0000255" key="2">
    <source>
        <dbReference type="PROSITE-ProRule" id="PRU10039"/>
    </source>
</evidence>
<evidence type="ECO:0000269" key="3">
    <source>
    </source>
</evidence>
<evidence type="ECO:0000305" key="4"/>
<evidence type="ECO:0007829" key="5">
    <source>
        <dbReference type="PDB" id="1C7I"/>
    </source>
</evidence>
<evidence type="ECO:0007829" key="6">
    <source>
        <dbReference type="PDB" id="1C7J"/>
    </source>
</evidence>
<evidence type="ECO:0007829" key="7">
    <source>
        <dbReference type="PDB" id="1QE3"/>
    </source>
</evidence>